<feature type="signal peptide" evidence="2">
    <location>
        <begin position="1"/>
        <end position="35"/>
    </location>
</feature>
<feature type="chain" id="PRO_0000275431" description="Cytochrome f">
    <location>
        <begin position="36"/>
        <end position="320"/>
    </location>
</feature>
<feature type="transmembrane region" description="Helical" evidence="2">
    <location>
        <begin position="286"/>
        <end position="306"/>
    </location>
</feature>
<feature type="binding site" description="axial binding residue" evidence="2">
    <location>
        <position position="36"/>
    </location>
    <ligand>
        <name>heme</name>
        <dbReference type="ChEBI" id="CHEBI:30413"/>
    </ligand>
    <ligandPart>
        <name>Fe</name>
        <dbReference type="ChEBI" id="CHEBI:18248"/>
    </ligandPart>
</feature>
<feature type="binding site" description="covalent" evidence="2">
    <location>
        <position position="56"/>
    </location>
    <ligand>
        <name>heme</name>
        <dbReference type="ChEBI" id="CHEBI:30413"/>
    </ligand>
</feature>
<feature type="binding site" description="covalent" evidence="2">
    <location>
        <position position="59"/>
    </location>
    <ligand>
        <name>heme</name>
        <dbReference type="ChEBI" id="CHEBI:30413"/>
    </ligand>
</feature>
<feature type="binding site" description="axial binding residue" evidence="2">
    <location>
        <position position="60"/>
    </location>
    <ligand>
        <name>heme</name>
        <dbReference type="ChEBI" id="CHEBI:30413"/>
    </ligand>
    <ligandPart>
        <name>Fe</name>
        <dbReference type="ChEBI" id="CHEBI:18248"/>
    </ligandPart>
</feature>
<geneLocation type="chloroplast"/>
<name>CYF_NICTO</name>
<organism>
    <name type="scientific">Nicotiana tomentosiformis</name>
    <name type="common">Tobacco</name>
    <dbReference type="NCBI Taxonomy" id="4098"/>
    <lineage>
        <taxon>Eukaryota</taxon>
        <taxon>Viridiplantae</taxon>
        <taxon>Streptophyta</taxon>
        <taxon>Embryophyta</taxon>
        <taxon>Tracheophyta</taxon>
        <taxon>Spermatophyta</taxon>
        <taxon>Magnoliopsida</taxon>
        <taxon>eudicotyledons</taxon>
        <taxon>Gunneridae</taxon>
        <taxon>Pentapetalae</taxon>
        <taxon>asterids</taxon>
        <taxon>lamiids</taxon>
        <taxon>Solanales</taxon>
        <taxon>Solanaceae</taxon>
        <taxon>Nicotianoideae</taxon>
        <taxon>Nicotianeae</taxon>
        <taxon>Nicotiana</taxon>
    </lineage>
</organism>
<keyword id="KW-0150">Chloroplast</keyword>
<keyword id="KW-0249">Electron transport</keyword>
<keyword id="KW-0349">Heme</keyword>
<keyword id="KW-0408">Iron</keyword>
<keyword id="KW-0472">Membrane</keyword>
<keyword id="KW-0479">Metal-binding</keyword>
<keyword id="KW-0602">Photosynthesis</keyword>
<keyword id="KW-0934">Plastid</keyword>
<keyword id="KW-0732">Signal</keyword>
<keyword id="KW-0793">Thylakoid</keyword>
<keyword id="KW-0812">Transmembrane</keyword>
<keyword id="KW-1133">Transmembrane helix</keyword>
<keyword id="KW-0813">Transport</keyword>
<dbReference type="EMBL" id="AB240139">
    <property type="protein sequence ID" value="BAE48015.1"/>
    <property type="molecule type" value="Genomic_DNA"/>
</dbReference>
<dbReference type="RefSeq" id="YP_398877.1">
    <property type="nucleotide sequence ID" value="NC_007602.1"/>
</dbReference>
<dbReference type="SMR" id="Q33C20"/>
<dbReference type="GeneID" id="3776356"/>
<dbReference type="KEGG" id="nto:3776356"/>
<dbReference type="OrthoDB" id="1251152at2759"/>
<dbReference type="GO" id="GO:0009535">
    <property type="term" value="C:chloroplast thylakoid membrane"/>
    <property type="evidence" value="ECO:0007669"/>
    <property type="project" value="UniProtKB-SubCell"/>
</dbReference>
<dbReference type="GO" id="GO:0009055">
    <property type="term" value="F:electron transfer activity"/>
    <property type="evidence" value="ECO:0007669"/>
    <property type="project" value="UniProtKB-UniRule"/>
</dbReference>
<dbReference type="GO" id="GO:0020037">
    <property type="term" value="F:heme binding"/>
    <property type="evidence" value="ECO:0007669"/>
    <property type="project" value="InterPro"/>
</dbReference>
<dbReference type="GO" id="GO:0005506">
    <property type="term" value="F:iron ion binding"/>
    <property type="evidence" value="ECO:0007669"/>
    <property type="project" value="InterPro"/>
</dbReference>
<dbReference type="GO" id="GO:0015979">
    <property type="term" value="P:photosynthesis"/>
    <property type="evidence" value="ECO:0007669"/>
    <property type="project" value="UniProtKB-UniRule"/>
</dbReference>
<dbReference type="FunFam" id="1.20.5.700:FF:000001">
    <property type="entry name" value="Cytochrome f"/>
    <property type="match status" value="1"/>
</dbReference>
<dbReference type="FunFam" id="2.40.50.100:FF:000007">
    <property type="entry name" value="Cytochrome f"/>
    <property type="match status" value="1"/>
</dbReference>
<dbReference type="FunFam" id="2.60.40.830:FF:000001">
    <property type="entry name" value="Cytochrome f"/>
    <property type="match status" value="1"/>
</dbReference>
<dbReference type="Gene3D" id="2.40.50.100">
    <property type="match status" value="1"/>
</dbReference>
<dbReference type="Gene3D" id="2.60.40.830">
    <property type="entry name" value="Cytochrome f large domain"/>
    <property type="match status" value="1"/>
</dbReference>
<dbReference type="Gene3D" id="1.20.5.700">
    <property type="entry name" value="Single helix bin"/>
    <property type="match status" value="1"/>
</dbReference>
<dbReference type="HAMAP" id="MF_00610">
    <property type="entry name" value="Cytb6_f_cytF"/>
    <property type="match status" value="1"/>
</dbReference>
<dbReference type="InterPro" id="IPR024058">
    <property type="entry name" value="Cyt-f_TM"/>
</dbReference>
<dbReference type="InterPro" id="IPR002325">
    <property type="entry name" value="Cyt_f"/>
</dbReference>
<dbReference type="InterPro" id="IPR024094">
    <property type="entry name" value="Cyt_f_lg_dom"/>
</dbReference>
<dbReference type="InterPro" id="IPR036826">
    <property type="entry name" value="Cyt_f_lg_dom_sf"/>
</dbReference>
<dbReference type="InterPro" id="IPR011054">
    <property type="entry name" value="Rudment_hybrid_motif"/>
</dbReference>
<dbReference type="PANTHER" id="PTHR33288">
    <property type="match status" value="1"/>
</dbReference>
<dbReference type="PANTHER" id="PTHR33288:SF10">
    <property type="entry name" value="CYTOCHROME F"/>
    <property type="match status" value="1"/>
</dbReference>
<dbReference type="Pfam" id="PF01333">
    <property type="entry name" value="Apocytochr_F_C"/>
    <property type="match status" value="1"/>
</dbReference>
<dbReference type="Pfam" id="PF16639">
    <property type="entry name" value="Apocytochr_F_N"/>
    <property type="match status" value="1"/>
</dbReference>
<dbReference type="PRINTS" id="PR00610">
    <property type="entry name" value="CYTOCHROMEF"/>
</dbReference>
<dbReference type="SUPFAM" id="SSF103431">
    <property type="entry name" value="Cytochrome f subunit of the cytochrome b6f complex, transmembrane anchor"/>
    <property type="match status" value="1"/>
</dbReference>
<dbReference type="SUPFAM" id="SSF49441">
    <property type="entry name" value="Cytochrome f, large domain"/>
    <property type="match status" value="1"/>
</dbReference>
<dbReference type="SUPFAM" id="SSF51246">
    <property type="entry name" value="Rudiment single hybrid motif"/>
    <property type="match status" value="1"/>
</dbReference>
<dbReference type="PROSITE" id="PS51010">
    <property type="entry name" value="CYTF"/>
    <property type="match status" value="1"/>
</dbReference>
<comment type="function">
    <text evidence="2">Component of the cytochrome b6-f complex, which mediates electron transfer between photosystem II (PSII) and photosystem I (PSI), cyclic electron flow around PSI, and state transitions.</text>
</comment>
<comment type="cofactor">
    <cofactor evidence="2">
        <name>heme</name>
        <dbReference type="ChEBI" id="CHEBI:30413"/>
    </cofactor>
    <text evidence="2">Binds 1 heme group covalently.</text>
</comment>
<comment type="subunit">
    <text evidence="1">The 4 large subunits of the cytochrome b6-f complex are cytochrome b6, subunit IV (17 kDa polypeptide, petD), cytochrome f and the Rieske protein, while the 4 small subunits are PetG, PetL, PetM and PetN. The complex functions as a dimer (By similarity).</text>
</comment>
<comment type="subcellular location">
    <subcellularLocation>
        <location evidence="2">Plastid</location>
        <location evidence="2">Chloroplast thylakoid membrane</location>
        <topology evidence="2">Single-pass membrane protein</topology>
    </subcellularLocation>
</comment>
<comment type="similarity">
    <text evidence="2">Belongs to the cytochrome f family.</text>
</comment>
<evidence type="ECO:0000250" key="1"/>
<evidence type="ECO:0000255" key="2">
    <source>
        <dbReference type="HAMAP-Rule" id="MF_00610"/>
    </source>
</evidence>
<accession>Q33C20</accession>
<sequence>MQTRNAFSWLKKQITRSISVSLMIYILTRTSISSAYPIFAQQGYENPREATGRIVCANCHLANKPVEIEVPQAVLPDTVFEAVVRIPYDMQLKQVLANGKRGGLNVGAVLILPEGFELAPPDRISPEMKEKIGNLSFQSYRPNKKNILVIGPVPGQKYSEITFPILSPDPATKKDVRFLKYPIYVGGNRGRGQIYPDGSKSNNTVYNATAAGIVSKIIRKEKGGYEITIADASDGRQVVDIIPPGPELLVSEGESIKFDQPLTSNPNVGGFGQGDAEIVFQDPLRAQGLLFFLASVILAQIFLVLKKKQFEKVQLAEMNF</sequence>
<reference key="1">
    <citation type="journal article" date="2006" name="Mol. Genet. Genomics">
        <title>The chloroplast genome of Nicotiana sylvestris and Nicotiana tomentosiformis: complete sequencing confirms that the Nicotiana sylvestris progenitor is the maternal genome donor of Nicotiana tabacum.</title>
        <authorList>
            <person name="Yukawa M."/>
            <person name="Tsudzuki T."/>
            <person name="Sugiura M."/>
        </authorList>
    </citation>
    <scope>NUCLEOTIDE SEQUENCE [LARGE SCALE GENOMIC DNA]</scope>
</reference>
<protein>
    <recommendedName>
        <fullName evidence="2">Cytochrome f</fullName>
    </recommendedName>
</protein>
<gene>
    <name evidence="2" type="primary">petA</name>
</gene>
<proteinExistence type="inferred from homology"/>